<protein>
    <recommendedName>
        <fullName>BRCA1-A complex subunit RAP80</fullName>
    </recommendedName>
    <alternativeName>
        <fullName>Receptor-associated protein 80</fullName>
    </alternativeName>
    <alternativeName>
        <fullName>Ubiquitin interaction motif-containing protein 1</fullName>
    </alternativeName>
</protein>
<name>UIMC1_PIG</name>
<gene>
    <name type="primary">UIMC1</name>
    <name type="synonym">RAP80</name>
</gene>
<keyword id="KW-0156">Chromatin regulator</keyword>
<keyword id="KW-0227">DNA damage</keyword>
<keyword id="KW-0234">DNA repair</keyword>
<keyword id="KW-1017">Isopeptide bond</keyword>
<keyword id="KW-0479">Metal-binding</keyword>
<keyword id="KW-0539">Nucleus</keyword>
<keyword id="KW-0597">Phosphoprotein</keyword>
<keyword id="KW-1185">Reference proteome</keyword>
<keyword id="KW-0677">Repeat</keyword>
<keyword id="KW-0804">Transcription</keyword>
<keyword id="KW-0805">Transcription regulation</keyword>
<keyword id="KW-0832">Ubl conjugation</keyword>
<keyword id="KW-0862">Zinc</keyword>
<keyword id="KW-0863">Zinc-finger</keyword>
<evidence type="ECO:0000250" key="1"/>
<evidence type="ECO:0000250" key="2">
    <source>
        <dbReference type="UniProtKB" id="Q5U5Q9"/>
    </source>
</evidence>
<evidence type="ECO:0000250" key="3">
    <source>
        <dbReference type="UniProtKB" id="Q96RL1"/>
    </source>
</evidence>
<evidence type="ECO:0000255" key="4">
    <source>
        <dbReference type="PROSITE-ProRule" id="PRU00213"/>
    </source>
</evidence>
<evidence type="ECO:0000255" key="5">
    <source>
        <dbReference type="PROSITE-ProRule" id="PRU01256"/>
    </source>
</evidence>
<evidence type="ECO:0000256" key="6">
    <source>
        <dbReference type="SAM" id="MobiDB-lite"/>
    </source>
</evidence>
<evidence type="ECO:0000305" key="7"/>
<comment type="function">
    <text evidence="3">Ubiquitin-binding protein. Specifically recognizes and binds 'Lys-63'-linked ubiquitin. Plays a central role in the BRCA1-A complex by specifically binding 'Lys-63'-linked ubiquitinated histones H2A and H2AX at DNA lesions sites, leading to target the BRCA1-BARD1 heterodimer to sites of DNA damage at double-strand breaks (DSBs). The BRCA1-A complex also possesses deubiquitinase activity that specifically removes 'Lys-63'-linked ubiquitin on histones H2A and H2AX. Also weakly binds monoubiquitin but with much less affinity than 'Lys-63'-linked ubiquitin. May interact with monoubiquitinated histones H2A and H2B; the relevance of such results is however unclear in vivo. Does not bind Lys-48'-linked ubiquitin. May indirectly act as a transcriptional repressor by inhibiting the interaction of NR6A1 with the corepressor NCOR1.</text>
</comment>
<comment type="subunit">
    <text evidence="2 3">Component of the ARISC complex, at least composed of UIMC1/RAP80, ABRAXAS1, BRCC3/BRCC36, BABAM2 and BABAM1/NBA1. Component of the BRCA1-A complex, at least composed of the BRCA1, BARD1, UIMC1/RAP80, ABRAXAS1, BRCC3/BRCC36, BABAM2 and BABAM1/NBA1. In the BRCA1-A complex, interacts directly with ABRAXAS1. Interacts with UBE2I. Interacts with NR6A1. Interacts with ESR1 (By similarity). Interacts with TSP57 (By similarity). Interacts with TRAIP (By similarity).</text>
</comment>
<comment type="subcellular location">
    <subcellularLocation>
        <location evidence="3">Nucleus</location>
    </subcellularLocation>
    <text evidence="3">Localizes at sites of DNA damage at double-strand breaks (DSBs).</text>
</comment>
<comment type="domain">
    <text evidence="2 3">The tandem UIM domains form a continuous 60 Angstrom-long alpha-helix and mediate binding to 'Lys-63'-linked ubiquitins. UIM1 and UIM2 bind to the proximal and distal ubiquitin moieties and recognize an 'Ile-44'-centered hydrophobic patch. Since UIMs don't interact with the 'Lys-63' isopeptide bond the UIM-linker region between the 2 UIM domains determines the selectivity for 'Lys-63'-linkage, and its length is very important for specificity.</text>
</comment>
<comment type="domain">
    <text evidence="3">The Abraxas-interacting region (AIR) mediates the interaction with ABRAXAS1.</text>
</comment>
<comment type="PTM">
    <text evidence="3">Sumoylated.</text>
</comment>
<comment type="PTM">
    <text evidence="3">Phosphorylated upon DNA damage by ATM or ATR.</text>
</comment>
<comment type="similarity">
    <text evidence="7">Belongs to the RAP80 family.</text>
</comment>
<accession>A0P8Z5</accession>
<dbReference type="EMBL" id="AB248750">
    <property type="protein sequence ID" value="BAF37830.1"/>
    <property type="molecule type" value="mRNA"/>
</dbReference>
<dbReference type="RefSeq" id="NP_001090916.1">
    <property type="nucleotide sequence ID" value="NM_001097447.1"/>
</dbReference>
<dbReference type="SMR" id="A0P8Z5"/>
<dbReference type="BioGRID" id="1151459">
    <property type="interactions" value="1"/>
</dbReference>
<dbReference type="FunCoup" id="A0P8Z5">
    <property type="interactions" value="1197"/>
</dbReference>
<dbReference type="STRING" id="9823.ENSSSCP00000026135"/>
<dbReference type="PaxDb" id="9823-ENSSSCP00000026135"/>
<dbReference type="PeptideAtlas" id="A0P8Z5"/>
<dbReference type="GeneID" id="100037949"/>
<dbReference type="KEGG" id="ssc:100037949"/>
<dbReference type="CTD" id="51720"/>
<dbReference type="eggNOG" id="ENOG502QQGN">
    <property type="taxonomic scope" value="Eukaryota"/>
</dbReference>
<dbReference type="InParanoid" id="A0P8Z5"/>
<dbReference type="OrthoDB" id="7536094at2759"/>
<dbReference type="Proteomes" id="UP000008227">
    <property type="component" value="Unplaced"/>
</dbReference>
<dbReference type="Proteomes" id="UP000314985">
    <property type="component" value="Unplaced"/>
</dbReference>
<dbReference type="Proteomes" id="UP000694570">
    <property type="component" value="Unplaced"/>
</dbReference>
<dbReference type="Proteomes" id="UP000694571">
    <property type="component" value="Unplaced"/>
</dbReference>
<dbReference type="Proteomes" id="UP000694720">
    <property type="component" value="Unplaced"/>
</dbReference>
<dbReference type="Proteomes" id="UP000694722">
    <property type="component" value="Unplaced"/>
</dbReference>
<dbReference type="Proteomes" id="UP000694723">
    <property type="component" value="Unplaced"/>
</dbReference>
<dbReference type="Proteomes" id="UP000694724">
    <property type="component" value="Unplaced"/>
</dbReference>
<dbReference type="Proteomes" id="UP000694725">
    <property type="component" value="Unplaced"/>
</dbReference>
<dbReference type="Proteomes" id="UP000694726">
    <property type="component" value="Unplaced"/>
</dbReference>
<dbReference type="Proteomes" id="UP000694727">
    <property type="component" value="Unplaced"/>
</dbReference>
<dbReference type="Proteomes" id="UP000694728">
    <property type="component" value="Unplaced"/>
</dbReference>
<dbReference type="GO" id="GO:0070531">
    <property type="term" value="C:BRCA1-A complex"/>
    <property type="evidence" value="ECO:0000250"/>
    <property type="project" value="UniProtKB"/>
</dbReference>
<dbReference type="GO" id="GO:0005634">
    <property type="term" value="C:nucleus"/>
    <property type="evidence" value="ECO:0000250"/>
    <property type="project" value="UniProtKB"/>
</dbReference>
<dbReference type="GO" id="GO:0003677">
    <property type="term" value="F:DNA binding"/>
    <property type="evidence" value="ECO:0007669"/>
    <property type="project" value="InterPro"/>
</dbReference>
<dbReference type="GO" id="GO:0042393">
    <property type="term" value="F:histone binding"/>
    <property type="evidence" value="ECO:0000250"/>
    <property type="project" value="UniProtKB"/>
</dbReference>
<dbReference type="GO" id="GO:0070530">
    <property type="term" value="F:K63-linked polyubiquitin modification-dependent protein binding"/>
    <property type="evidence" value="ECO:0000250"/>
    <property type="project" value="UniProtKB"/>
</dbReference>
<dbReference type="GO" id="GO:0008270">
    <property type="term" value="F:zinc ion binding"/>
    <property type="evidence" value="ECO:0007669"/>
    <property type="project" value="UniProtKB-KW"/>
</dbReference>
<dbReference type="GO" id="GO:0006325">
    <property type="term" value="P:chromatin organization"/>
    <property type="evidence" value="ECO:0007669"/>
    <property type="project" value="UniProtKB-KW"/>
</dbReference>
<dbReference type="GO" id="GO:0006302">
    <property type="term" value="P:double-strand break repair"/>
    <property type="evidence" value="ECO:0000250"/>
    <property type="project" value="UniProtKB"/>
</dbReference>
<dbReference type="GO" id="GO:0007095">
    <property type="term" value="P:mitotic G2 DNA damage checkpoint signaling"/>
    <property type="evidence" value="ECO:0000250"/>
    <property type="project" value="UniProtKB"/>
</dbReference>
<dbReference type="GO" id="GO:0045739">
    <property type="term" value="P:positive regulation of DNA repair"/>
    <property type="evidence" value="ECO:0000250"/>
    <property type="project" value="UniProtKB"/>
</dbReference>
<dbReference type="GO" id="GO:0010212">
    <property type="term" value="P:response to ionizing radiation"/>
    <property type="evidence" value="ECO:0000250"/>
    <property type="project" value="UniProtKB"/>
</dbReference>
<dbReference type="CDD" id="cd20912">
    <property type="entry name" value="AIR_RAP80-like"/>
    <property type="match status" value="1"/>
</dbReference>
<dbReference type="Gene3D" id="6.10.250.1800">
    <property type="match status" value="1"/>
</dbReference>
<dbReference type="InterPro" id="IPR006642">
    <property type="entry name" value="Rad18_UBZ4"/>
</dbReference>
<dbReference type="InterPro" id="IPR038868">
    <property type="entry name" value="RAP80"/>
</dbReference>
<dbReference type="InterPro" id="IPR040714">
    <property type="entry name" value="RAP80_UIM"/>
</dbReference>
<dbReference type="InterPro" id="IPR003903">
    <property type="entry name" value="UIM_dom"/>
</dbReference>
<dbReference type="PANTHER" id="PTHR15932:SF2">
    <property type="entry name" value="BRCA1-A COMPLEX SUBUNIT RAP80"/>
    <property type="match status" value="1"/>
</dbReference>
<dbReference type="PANTHER" id="PTHR15932">
    <property type="entry name" value="UBIQUITIN INTERACTION MOTIF-CONTAINING PROTEIN 1"/>
    <property type="match status" value="1"/>
</dbReference>
<dbReference type="Pfam" id="PF18282">
    <property type="entry name" value="RAP80_UIM"/>
    <property type="match status" value="1"/>
</dbReference>
<dbReference type="SMART" id="SM00726">
    <property type="entry name" value="UIM"/>
    <property type="match status" value="2"/>
</dbReference>
<dbReference type="PROSITE" id="PS50330">
    <property type="entry name" value="UIM"/>
    <property type="match status" value="1"/>
</dbReference>
<dbReference type="PROSITE" id="PS51908">
    <property type="entry name" value="ZF_UBZ4"/>
    <property type="match status" value="1"/>
</dbReference>
<reference key="1">
    <citation type="journal article" date="2007" name="Genome Res.">
        <title>Fine mapping of a swine quantitative trait locus for number of vertebrae and analysis of an orphan nuclear receptor, germ cell nuclear factor (NR6A1).</title>
        <authorList>
            <person name="Mikawa S."/>
            <person name="Morozumi T."/>
            <person name="Shimanuki S."/>
            <person name="Hayashi T."/>
            <person name="Uenishi H."/>
            <person name="Domukai M."/>
            <person name="Okumura N."/>
            <person name="Awata T."/>
        </authorList>
    </citation>
    <scope>NUCLEOTIDE SEQUENCE [MRNA]</scope>
    <scope>INTERACTION WITH NR6A1</scope>
</reference>
<feature type="chain" id="PRO_0000311222" description="BRCA1-A complex subunit RAP80">
    <location>
        <begin position="1"/>
        <end position="721"/>
    </location>
</feature>
<feature type="domain" description="UIM 1" evidence="4">
    <location>
        <begin position="80"/>
        <end position="99"/>
    </location>
</feature>
<feature type="domain" description="UIM 2" evidence="4">
    <location>
        <begin position="105"/>
        <end position="124"/>
    </location>
</feature>
<feature type="zinc finger region" description="UBZ4-type" evidence="5">
    <location>
        <begin position="502"/>
        <end position="529"/>
    </location>
</feature>
<feature type="region of interest" description="Necessary for transcriptional repression" evidence="1">
    <location>
        <begin position="1"/>
        <end position="101"/>
    </location>
</feature>
<feature type="region of interest" description="Disordered" evidence="6">
    <location>
        <begin position="1"/>
        <end position="65"/>
    </location>
</feature>
<feature type="region of interest" description="Disordered" evidence="6">
    <location>
        <begin position="93"/>
        <end position="204"/>
    </location>
</feature>
<feature type="region of interest" description="UIM-linker">
    <location>
        <begin position="97"/>
        <end position="103"/>
    </location>
</feature>
<feature type="region of interest" description="Necessary for interaction with NR6A1 N-terminus" evidence="1">
    <location>
        <begin position="100"/>
        <end position="200"/>
    </location>
</feature>
<feature type="region of interest" description="AIR">
    <location>
        <begin position="270"/>
        <end position="400"/>
    </location>
</feature>
<feature type="region of interest" description="Disordered" evidence="6">
    <location>
        <begin position="334"/>
        <end position="369"/>
    </location>
</feature>
<feature type="region of interest" description="Disordered" evidence="6">
    <location>
        <begin position="391"/>
        <end position="418"/>
    </location>
</feature>
<feature type="region of interest" description="Necessary for interaction with NR6A1 C-terminus" evidence="1">
    <location>
        <begin position="400"/>
        <end position="500"/>
    </location>
</feature>
<feature type="region of interest" description="Zinc-finger-like region">
    <location>
        <begin position="505"/>
        <end position="582"/>
    </location>
</feature>
<feature type="short sequence motif" description="LR motif">
    <location>
        <begin position="60"/>
        <end position="78"/>
    </location>
</feature>
<feature type="compositionally biased region" description="Polar residues" evidence="6">
    <location>
        <begin position="117"/>
        <end position="130"/>
    </location>
</feature>
<feature type="compositionally biased region" description="Low complexity" evidence="6">
    <location>
        <begin position="194"/>
        <end position="204"/>
    </location>
</feature>
<feature type="compositionally biased region" description="Acidic residues" evidence="6">
    <location>
        <begin position="349"/>
        <end position="358"/>
    </location>
</feature>
<feature type="binding site" evidence="5">
    <location>
        <position position="505"/>
    </location>
    <ligand>
        <name>Zn(2+)</name>
        <dbReference type="ChEBI" id="CHEBI:29105"/>
    </ligand>
</feature>
<feature type="binding site" evidence="5">
    <location>
        <position position="508"/>
    </location>
    <ligand>
        <name>Zn(2+)</name>
        <dbReference type="ChEBI" id="CHEBI:29105"/>
    </ligand>
</feature>
<feature type="binding site" evidence="5">
    <location>
        <position position="520"/>
    </location>
    <ligand>
        <name>Zn(2+)</name>
        <dbReference type="ChEBI" id="CHEBI:29105"/>
    </ligand>
</feature>
<feature type="binding site" evidence="5">
    <location>
        <position position="524"/>
    </location>
    <ligand>
        <name>Zn(2+)</name>
        <dbReference type="ChEBI" id="CHEBI:29105"/>
    </ligand>
</feature>
<feature type="modified residue" description="Phosphoserine" evidence="3">
    <location>
        <position position="29"/>
    </location>
</feature>
<feature type="modified residue" description="Phosphoserine" evidence="3">
    <location>
        <position position="44"/>
    </location>
</feature>
<feature type="modified residue" description="Phosphoserine" evidence="3">
    <location>
        <position position="46"/>
    </location>
</feature>
<feature type="modified residue" description="Phosphoserine" evidence="3">
    <location>
        <position position="101"/>
    </location>
</feature>
<feature type="modified residue" description="Phosphoserine" evidence="3">
    <location>
        <position position="140"/>
    </location>
</feature>
<feature type="modified residue" description="Phosphoserine" evidence="3">
    <location>
        <position position="205"/>
    </location>
</feature>
<feature type="modified residue" description="Phosphoserine" evidence="3">
    <location>
        <position position="402"/>
    </location>
</feature>
<feature type="modified residue" description="Phosphoserine" evidence="3">
    <location>
        <position position="420"/>
    </location>
</feature>
<feature type="modified residue" description="Phosphoserine" evidence="3">
    <location>
        <position position="467"/>
    </location>
</feature>
<feature type="modified residue" description="Phosphoserine" evidence="3">
    <location>
        <position position="627"/>
    </location>
</feature>
<feature type="modified residue" description="Phosphoserine" evidence="3">
    <location>
        <position position="655"/>
    </location>
</feature>
<feature type="modified residue" description="Phosphoserine" evidence="3">
    <location>
        <position position="679"/>
    </location>
</feature>
<feature type="cross-link" description="Glycyl lysine isopeptide (Lys-Gly) (interchain with G-Cter in SUMO2)" evidence="3">
    <location>
        <position position="20"/>
    </location>
</feature>
<feature type="cross-link" description="Glycyl lysine isopeptide (Lys-Gly) (interchain with G-Cter in SUMO2)" evidence="3">
    <location>
        <position position="31"/>
    </location>
</feature>
<feature type="cross-link" description="Glycyl lysine isopeptide (Lys-Gly) (interchain with G-Cter in SUMO2)" evidence="3">
    <location>
        <position position="75"/>
    </location>
</feature>
<feature type="cross-link" description="Glycyl lysine isopeptide (Lys-Gly) (interchain with G-Cter in SUMO2)" evidence="3">
    <location>
        <position position="90"/>
    </location>
</feature>
<feature type="cross-link" description="Glycyl lysine isopeptide (Lys-Gly) (interchain with G-Cter in SUMO2)" evidence="3">
    <location>
        <position position="245"/>
    </location>
</feature>
<feature type="cross-link" description="Glycyl lysine isopeptide (Lys-Gly) (interchain with G-Cter in SUMO2)" evidence="3">
    <location>
        <position position="382"/>
    </location>
</feature>
<feature type="cross-link" description="Glycyl lysine isopeptide (Lys-Gly) (interchain with G-Cter in SUMO2)" evidence="3">
    <location>
        <position position="387"/>
    </location>
</feature>
<feature type="cross-link" description="Glycyl lysine isopeptide (Lys-Gly) (interchain with G-Cter in SUMO2)" evidence="3">
    <location>
        <position position="429"/>
    </location>
</feature>
<feature type="cross-link" description="Glycyl lysine isopeptide (Lys-Gly) (interchain with G-Cter in SUMO2)" evidence="3">
    <location>
        <position position="544"/>
    </location>
</feature>
<feature type="cross-link" description="Glycyl lysine isopeptide (Lys-Gly) (interchain with G-Cter in SUMO2)" evidence="3">
    <location>
        <position position="559"/>
    </location>
</feature>
<feature type="cross-link" description="Glycyl lysine isopeptide (Lys-Gly) (interchain with G-Cter in SUMO2)" evidence="3">
    <location>
        <position position="562"/>
    </location>
</feature>
<feature type="cross-link" description="Glycyl lysine isopeptide (Lys-Gly) (interchain with G-Cter in SUMO2)" evidence="3">
    <location>
        <position position="607"/>
    </location>
</feature>
<feature type="cross-link" description="Glycyl lysine isopeptide (Lys-Gly) (interchain with G-Cter in SUMO2)" evidence="3">
    <location>
        <position position="635"/>
    </location>
</feature>
<feature type="cross-link" description="Glycyl lysine isopeptide (Lys-Gly) (interchain with G-Cter in SUMO2)" evidence="3">
    <location>
        <position position="642"/>
    </location>
</feature>
<feature type="cross-link" description="Glycyl lysine isopeptide (Lys-Gly) (interchain with G-Cter in SUMO2)" evidence="3">
    <location>
        <position position="698"/>
    </location>
</feature>
<feature type="cross-link" description="Glycyl lysine isopeptide (Lys-Gly) (interchain with G-Cter in SUMO2)" evidence="3">
    <location>
        <position position="699"/>
    </location>
</feature>
<sequence length="721" mass="79863">MPRRKKKGKEASGAQNLEKKDAETASSVSVKKKRRIEDGFIVISDSDGEEPKEENGLQKTKIKQSSRAKCLAKRKIAQMTEEEQFALALKMSEQEAREVNSQEEEEEELLRKAIAESLNSCRPSDASATRSRPLATGPSSESHQEKSTDSGTTEGIWQLVPPSLFKGSHISQGNESEEREEPWDHNENTEEEPVSVSSGSWDQSSQPVFENENVKCFDRCTGHLAEHTQCGKPQNECGRGSAFLKAVQGSGDTSRHCLPTLADAKGLQDTGGTVNYFWGIPFCPDGVDPNQYTKVILCQLEVYQKSLKMAQRQLLNKKGFGEPVLPRPPSLIQNECGQGEQASEKNEGISEDMGDEDKEERQESRASVWRAKTKDFQEGPIKTLKEKLLLEEEPTTSHGQSSQGLFVEETSEEGNSVPASQSIAALTGKRSSVLMPESSAEEITVCPETQLSSPETFDLEKEGFPDSRETLYEVSIMADKEVDNREDAKKEIHTSTFSSSTQVSCPLCDQGFPPTKIERHAMYCNGLMGGDTVLTRRQKEAKNKSDNGIAAQTSLDIDKNEKCYLCKSLVPFREYQCHVESCLQLARVDQGDGPEESGRLCLAVDGKRPQQLKNLKEKDRSEGRLISLLEQSEYKTTDAEIKTKFSETGDFRVPSAGVEEAGCSREMQSSLAHLDLNESPIKSFVSVSEAADCLVDFKKQLTARPGSRTRTKAGRGRRRKS</sequence>
<organism>
    <name type="scientific">Sus scrofa</name>
    <name type="common">Pig</name>
    <dbReference type="NCBI Taxonomy" id="9823"/>
    <lineage>
        <taxon>Eukaryota</taxon>
        <taxon>Metazoa</taxon>
        <taxon>Chordata</taxon>
        <taxon>Craniata</taxon>
        <taxon>Vertebrata</taxon>
        <taxon>Euteleostomi</taxon>
        <taxon>Mammalia</taxon>
        <taxon>Eutheria</taxon>
        <taxon>Laurasiatheria</taxon>
        <taxon>Artiodactyla</taxon>
        <taxon>Suina</taxon>
        <taxon>Suidae</taxon>
        <taxon>Sus</taxon>
    </lineage>
</organism>
<proteinExistence type="evidence at protein level"/>